<sequence length="261" mass="27178">MAAVTPTVPEFVNVVVSDGSQDAGLAMLLLSRPPTNAMTRQVYREVVAAANELGRRDDVAAVILYGGHEIFSAGDDMPELRTLSAQEADTAARIRQQAVDAVAAIPKPTVAAITGYALGAGLTLALAADWRVSGDNVKFGATEILAGLIPSGDGMARLTRAAGPSRAKELVFSGRFFDAEEALALGLIDDMVAPDDVYDAAAAWARRFLDGPPHALAAAKAGISDVYELAPAERIAAERRRYVEVFAAGQGGGSKGDRGGR</sequence>
<feature type="chain" id="PRO_0000383566" description="Probable enoyl-CoA hydratase EchA17">
    <location>
        <begin position="1"/>
        <end position="261"/>
    </location>
</feature>
<feature type="site" description="Important for catalytic activity" evidence="1">
    <location>
        <position position="143"/>
    </location>
</feature>
<dbReference type="EC" id="4.2.1.17"/>
<dbReference type="EMBL" id="CP000611">
    <property type="protein sequence ID" value="ABQ74853.1"/>
    <property type="status" value="ALT_INIT"/>
    <property type="molecule type" value="Genomic_DNA"/>
</dbReference>
<dbReference type="SMR" id="A5U753"/>
<dbReference type="KEGG" id="mra:MRA_3071"/>
<dbReference type="eggNOG" id="COG1024">
    <property type="taxonomic scope" value="Bacteria"/>
</dbReference>
<dbReference type="HOGENOM" id="CLU_009834_7_6_11"/>
<dbReference type="Proteomes" id="UP000001988">
    <property type="component" value="Chromosome"/>
</dbReference>
<dbReference type="GO" id="GO:0004300">
    <property type="term" value="F:enoyl-CoA hydratase activity"/>
    <property type="evidence" value="ECO:0007669"/>
    <property type="project" value="UniProtKB-EC"/>
</dbReference>
<dbReference type="GO" id="GO:0006635">
    <property type="term" value="P:fatty acid beta-oxidation"/>
    <property type="evidence" value="ECO:0007669"/>
    <property type="project" value="TreeGrafter"/>
</dbReference>
<dbReference type="CDD" id="cd06558">
    <property type="entry name" value="crotonase-like"/>
    <property type="match status" value="1"/>
</dbReference>
<dbReference type="FunFam" id="3.90.226.10:FF:000009">
    <property type="entry name" value="Carnitinyl-CoA dehydratase"/>
    <property type="match status" value="1"/>
</dbReference>
<dbReference type="Gene3D" id="3.90.226.10">
    <property type="entry name" value="2-enoyl-CoA Hydratase, Chain A, domain 1"/>
    <property type="match status" value="1"/>
</dbReference>
<dbReference type="Gene3D" id="1.10.12.10">
    <property type="entry name" value="Lyase 2-enoyl-coa Hydratase, Chain A, domain 2"/>
    <property type="match status" value="1"/>
</dbReference>
<dbReference type="InterPro" id="IPR029045">
    <property type="entry name" value="ClpP/crotonase-like_dom_sf"/>
</dbReference>
<dbReference type="InterPro" id="IPR001753">
    <property type="entry name" value="Enoyl-CoA_hydra/iso"/>
</dbReference>
<dbReference type="InterPro" id="IPR014748">
    <property type="entry name" value="Enoyl-CoA_hydra_C"/>
</dbReference>
<dbReference type="NCBIfam" id="NF004524">
    <property type="entry name" value="PRK05869.1"/>
    <property type="match status" value="1"/>
</dbReference>
<dbReference type="PANTHER" id="PTHR11941:SF169">
    <property type="entry name" value="(7AS)-7A-METHYL-1,5-DIOXO-2,3,5,6,7,7A-HEXAHYDRO-1H-INDENE-CARBOXYL-COA HYDROLASE"/>
    <property type="match status" value="1"/>
</dbReference>
<dbReference type="PANTHER" id="PTHR11941">
    <property type="entry name" value="ENOYL-COA HYDRATASE-RELATED"/>
    <property type="match status" value="1"/>
</dbReference>
<dbReference type="Pfam" id="PF00378">
    <property type="entry name" value="ECH_1"/>
    <property type="match status" value="1"/>
</dbReference>
<dbReference type="SUPFAM" id="SSF52096">
    <property type="entry name" value="ClpP/crotonase"/>
    <property type="match status" value="1"/>
</dbReference>
<keyword id="KW-0276">Fatty acid metabolism</keyword>
<keyword id="KW-0443">Lipid metabolism</keyword>
<keyword id="KW-0456">Lyase</keyword>
<keyword id="KW-1185">Reference proteome</keyword>
<organism>
    <name type="scientific">Mycobacterium tuberculosis (strain ATCC 25177 / H37Ra)</name>
    <dbReference type="NCBI Taxonomy" id="419947"/>
    <lineage>
        <taxon>Bacteria</taxon>
        <taxon>Bacillati</taxon>
        <taxon>Actinomycetota</taxon>
        <taxon>Actinomycetes</taxon>
        <taxon>Mycobacteriales</taxon>
        <taxon>Mycobacteriaceae</taxon>
        <taxon>Mycobacterium</taxon>
        <taxon>Mycobacterium tuberculosis complex</taxon>
    </lineage>
</organism>
<comment type="function">
    <text evidence="1">Could possibly oxidize fatty acids using specific components.</text>
</comment>
<comment type="catalytic activity">
    <reaction>
        <text>a (3S)-3-hydroxyacyl-CoA = a (2E)-enoyl-CoA + H2O</text>
        <dbReference type="Rhea" id="RHEA:16105"/>
        <dbReference type="ChEBI" id="CHEBI:15377"/>
        <dbReference type="ChEBI" id="CHEBI:57318"/>
        <dbReference type="ChEBI" id="CHEBI:58856"/>
        <dbReference type="EC" id="4.2.1.17"/>
    </reaction>
</comment>
<comment type="catalytic activity">
    <reaction>
        <text>a 4-saturated-(3S)-3-hydroxyacyl-CoA = a (3E)-enoyl-CoA + H2O</text>
        <dbReference type="Rhea" id="RHEA:20724"/>
        <dbReference type="ChEBI" id="CHEBI:15377"/>
        <dbReference type="ChEBI" id="CHEBI:58521"/>
        <dbReference type="ChEBI" id="CHEBI:137480"/>
        <dbReference type="EC" id="4.2.1.17"/>
    </reaction>
</comment>
<comment type="similarity">
    <text evidence="3">Belongs to the enoyl-CoA hydratase/isomerase family.</text>
</comment>
<comment type="sequence caution" evidence="2">
    <conflict type="erroneous initiation">
        <sequence resource="EMBL-CDS" id="ABQ74853"/>
    </conflict>
    <text>Truncated N-terminus.</text>
</comment>
<reference key="1">
    <citation type="journal article" date="2008" name="PLoS ONE">
        <title>Genetic basis of virulence attenuation revealed by comparative genomic analysis of Mycobacterium tuberculosis strain H37Ra versus H37Rv.</title>
        <authorList>
            <person name="Zheng H."/>
            <person name="Lu L."/>
            <person name="Wang B."/>
            <person name="Pu S."/>
            <person name="Zhang X."/>
            <person name="Zhu G."/>
            <person name="Shi W."/>
            <person name="Zhang L."/>
            <person name="Wang H."/>
            <person name="Wang S."/>
            <person name="Zhao G."/>
            <person name="Zhang Y."/>
        </authorList>
    </citation>
    <scope>NUCLEOTIDE SEQUENCE [LARGE SCALE GENOMIC DNA]</scope>
    <source>
        <strain>ATCC 25177 / H37Ra</strain>
    </source>
</reference>
<gene>
    <name type="primary">echA17</name>
    <name type="ordered locus">MRA_3071</name>
</gene>
<evidence type="ECO:0000250" key="1"/>
<evidence type="ECO:0000250" key="2">
    <source>
        <dbReference type="UniProtKB" id="P9WNN3"/>
    </source>
</evidence>
<evidence type="ECO:0000305" key="3"/>
<accession>A5U753</accession>
<proteinExistence type="inferred from homology"/>
<protein>
    <recommendedName>
        <fullName>Probable enoyl-CoA hydratase EchA17</fullName>
        <ecNumber>4.2.1.17</ecNumber>
    </recommendedName>
</protein>
<name>ECH17_MYCTA</name>